<protein>
    <recommendedName>
        <fullName evidence="3">Glucosylglycerol phosphorylase</fullName>
        <shortName evidence="3">GGoP</shortName>
        <ecNumber evidence="2">2.4.1.359</ecNumber>
    </recommendedName>
    <alternativeName>
        <fullName evidence="3">2-O-alpha-D-glucopyranosylglycerol:phosphate alpha-D-glucosyltransferase</fullName>
    </alternativeName>
    <alternativeName>
        <fullName evidence="3">2-O-alpha-D-glucosylglycerol phosphorylase (retaining)</fullName>
    </alternativeName>
</protein>
<feature type="chain" id="PRO_0000444046" description="Glucosylglycerol phosphorylase">
    <location>
        <begin position="1"/>
        <end position="480"/>
    </location>
</feature>
<feature type="active site" description="Nucleophile" evidence="1">
    <location>
        <position position="190"/>
    </location>
</feature>
<feature type="active site" description="Proton donor" evidence="1">
    <location>
        <position position="231"/>
    </location>
</feature>
<feature type="binding site" evidence="5">
    <location>
        <position position="194"/>
    </location>
    <ligand>
        <name>substrate</name>
    </ligand>
</feature>
<feature type="binding site" evidence="5">
    <location>
        <position position="336"/>
    </location>
    <ligand>
        <name>substrate</name>
    </ligand>
</feature>
<feature type="mutagenesis site" description="2.7% of wild-type catalytic activity." evidence="2">
    <original>Y</original>
    <variation>A</variation>
    <location>
        <position position="194"/>
    </location>
</feature>
<feature type="mutagenesis site" description="0.3% of wild-type catalytic activity. Does not gain activity on sucrose." evidence="2">
    <original>A</original>
    <variation>D</variation>
    <location>
        <position position="333"/>
    </location>
</feature>
<feature type="mutagenesis site" description="2.6% of wild-type catalytic activity." evidence="2">
    <original>Q</original>
    <variation>A</variation>
    <location>
        <position position="336"/>
    </location>
</feature>
<feature type="strand" evidence="8">
    <location>
        <begin position="8"/>
        <end position="11"/>
    </location>
</feature>
<feature type="strand" evidence="8">
    <location>
        <begin position="13"/>
        <end position="19"/>
    </location>
</feature>
<feature type="helix" evidence="8">
    <location>
        <begin position="20"/>
        <end position="30"/>
    </location>
</feature>
<feature type="turn" evidence="8">
    <location>
        <begin position="32"/>
        <end position="34"/>
    </location>
</feature>
<feature type="strand" evidence="8">
    <location>
        <begin position="36"/>
        <end position="40"/>
    </location>
</feature>
<feature type="strand" evidence="8">
    <location>
        <begin position="46"/>
        <end position="48"/>
    </location>
</feature>
<feature type="helix" evidence="8">
    <location>
        <begin position="49"/>
        <end position="51"/>
    </location>
</feature>
<feature type="strand" evidence="8">
    <location>
        <begin position="53"/>
        <end position="55"/>
    </location>
</feature>
<feature type="strand" evidence="7">
    <location>
        <begin position="57"/>
        <end position="59"/>
    </location>
</feature>
<feature type="turn" evidence="8">
    <location>
        <begin position="62"/>
        <end position="64"/>
    </location>
</feature>
<feature type="helix" evidence="8">
    <location>
        <begin position="67"/>
        <end position="76"/>
    </location>
</feature>
<feature type="strand" evidence="8">
    <location>
        <begin position="77"/>
        <end position="83"/>
    </location>
</feature>
<feature type="strand" evidence="8">
    <location>
        <begin position="87"/>
        <end position="89"/>
    </location>
</feature>
<feature type="helix" evidence="8">
    <location>
        <begin position="93"/>
        <end position="101"/>
    </location>
</feature>
<feature type="helix" evidence="8">
    <location>
        <begin position="102"/>
        <end position="104"/>
    </location>
</feature>
<feature type="helix" evidence="8">
    <location>
        <begin position="108"/>
        <end position="110"/>
    </location>
</feature>
<feature type="helix" evidence="8">
    <location>
        <begin position="114"/>
        <end position="117"/>
    </location>
</feature>
<feature type="helix" evidence="8">
    <location>
        <begin position="122"/>
        <end position="127"/>
    </location>
</feature>
<feature type="strand" evidence="8">
    <location>
        <begin position="131"/>
        <end position="134"/>
    </location>
</feature>
<feature type="strand" evidence="8">
    <location>
        <begin position="136"/>
        <end position="141"/>
    </location>
</feature>
<feature type="strand" evidence="8">
    <location>
        <begin position="147"/>
        <end position="151"/>
    </location>
</feature>
<feature type="strand" evidence="8">
    <location>
        <begin position="153"/>
        <end position="155"/>
    </location>
</feature>
<feature type="strand" evidence="8">
    <location>
        <begin position="158"/>
        <end position="161"/>
    </location>
</feature>
<feature type="strand" evidence="7">
    <location>
        <begin position="163"/>
        <end position="165"/>
    </location>
</feature>
<feature type="helix" evidence="8">
    <location>
        <begin position="166"/>
        <end position="181"/>
    </location>
</feature>
<feature type="strand" evidence="8">
    <location>
        <begin position="186"/>
        <end position="189"/>
    </location>
</feature>
<feature type="helix" evidence="8">
    <location>
        <begin position="192"/>
        <end position="194"/>
    </location>
</feature>
<feature type="strand" evidence="8">
    <location>
        <begin position="203"/>
        <end position="205"/>
    </location>
</feature>
<feature type="helix" evidence="8">
    <location>
        <begin position="209"/>
        <end position="223"/>
    </location>
</feature>
<feature type="strand" evidence="8">
    <location>
        <begin position="227"/>
        <end position="230"/>
    </location>
</feature>
<feature type="helix" evidence="8">
    <location>
        <begin position="237"/>
        <end position="244"/>
    </location>
</feature>
<feature type="helix" evidence="8">
    <location>
        <begin position="254"/>
        <end position="264"/>
    </location>
</feature>
<feature type="helix" evidence="8">
    <location>
        <begin position="268"/>
        <end position="276"/>
    </location>
</feature>
<feature type="strand" evidence="8">
    <location>
        <begin position="282"/>
        <end position="286"/>
    </location>
</feature>
<feature type="strand" evidence="8">
    <location>
        <begin position="291"/>
        <end position="293"/>
    </location>
</feature>
<feature type="helix" evidence="8">
    <location>
        <begin position="294"/>
        <end position="296"/>
    </location>
</feature>
<feature type="helix" evidence="8">
    <location>
        <begin position="302"/>
        <end position="315"/>
    </location>
</feature>
<feature type="strand" evidence="7">
    <location>
        <begin position="326"/>
        <end position="328"/>
    </location>
</feature>
<feature type="helix" evidence="8">
    <location>
        <begin position="331"/>
        <end position="333"/>
    </location>
</feature>
<feature type="strand" evidence="8">
    <location>
        <begin position="334"/>
        <end position="337"/>
    </location>
</feature>
<feature type="helix" evidence="8">
    <location>
        <begin position="341"/>
        <end position="344"/>
    </location>
</feature>
<feature type="turn" evidence="8">
    <location>
        <begin position="345"/>
        <end position="347"/>
    </location>
</feature>
<feature type="helix" evidence="8">
    <location>
        <begin position="349"/>
        <end position="361"/>
    </location>
</feature>
<feature type="strand" evidence="8">
    <location>
        <begin position="362"/>
        <end position="369"/>
    </location>
</feature>
<feature type="helix" evidence="8">
    <location>
        <begin position="370"/>
        <end position="373"/>
    </location>
</feature>
<feature type="helix" evidence="8">
    <location>
        <begin position="380"/>
        <end position="386"/>
    </location>
</feature>
<feature type="helix" evidence="8">
    <location>
        <begin position="390"/>
        <end position="393"/>
    </location>
</feature>
<feature type="helix" evidence="8">
    <location>
        <begin position="399"/>
        <end position="406"/>
    </location>
</feature>
<feature type="helix" evidence="8">
    <location>
        <begin position="409"/>
        <end position="423"/>
    </location>
</feature>
<feature type="helix" evidence="8">
    <location>
        <begin position="425"/>
        <end position="428"/>
    </location>
</feature>
<feature type="strand" evidence="8">
    <location>
        <begin position="429"/>
        <end position="434"/>
    </location>
</feature>
<feature type="strand" evidence="8">
    <location>
        <begin position="440"/>
        <end position="447"/>
    </location>
</feature>
<feature type="strand" evidence="8">
    <location>
        <begin position="450"/>
        <end position="457"/>
    </location>
</feature>
<feature type="turn" evidence="8">
    <location>
        <begin position="458"/>
        <end position="461"/>
    </location>
</feature>
<feature type="strand" evidence="8">
    <location>
        <begin position="462"/>
        <end position="469"/>
    </location>
</feature>
<feature type="turn" evidence="8">
    <location>
        <begin position="470"/>
        <end position="473"/>
    </location>
</feature>
<feature type="strand" evidence="8">
    <location>
        <begin position="474"/>
        <end position="478"/>
    </location>
</feature>
<comment type="function">
    <text evidence="2">Catalyzes the reversible phosphorolysis of 2-O-alpha-D-glucosylglycerol with retention of the anomeric configuration, forming alpha-D-glucose 1-phosphate and glycerol. Has most likely a catabolic role, either regulating the intracellular levels of glucosylglycerol, which acts as a compatible solute, or degrading it when the environmental conditions change. Cannot catalyze the phosphorolysis of sucrose or glucosylglycerate.</text>
</comment>
<comment type="catalytic activity">
    <reaction evidence="2">
        <text>2-O-(alpha-D-glucopyranosyl)glycerol + phosphate = alpha-D-glucose 1-phosphate + glycerol</text>
        <dbReference type="Rhea" id="RHEA:56416"/>
        <dbReference type="ChEBI" id="CHEBI:17754"/>
        <dbReference type="ChEBI" id="CHEBI:43474"/>
        <dbReference type="ChEBI" id="CHEBI:58601"/>
        <dbReference type="ChEBI" id="CHEBI:82766"/>
        <dbReference type="EC" id="2.4.1.359"/>
    </reaction>
</comment>
<comment type="biophysicochemical properties">
    <kinetics>
        <KM evidence="2">3.9 mM for 2-O-(alpha-D-glucopyranosyl)glycerol (at pH 6.5 and 37 degrees Celsius)</KM>
        <KM evidence="2">10 mM for phosphate (at pH 6.5 and 37 degrees Celsius)</KM>
        <KM evidence="2">2.5 mM for alpha-D-glucose 1-phosphate (at pH 6.5 and 37 degrees Celsius)</KM>
        <KM evidence="2">7 mM for glycerol (at pH 6.5 and 37 degrees Celsius)</KM>
        <text evidence="2">kcat is 14 sec(-1) towards 2-O-(alpha-D-glucopyranosyl)glycerol for the phosphorolytic direction (at pH 6.5 and 37 degrees Celsius). kcat is 14 sec(-1) towards phosphate for the phosphorolytic direction (at pH 6.5 and 37 degrees Celsius). kcat is 36 sec(-1) towards alpha-D-glucose 1-phosphate for the synthetic direction (at pH 6.5 and 37 degrees Celsius). kcat is 39 sec(-1) towards glycerol for the synthetic direction (at pH 6.5 and 37 degrees Celsius).</text>
    </kinetics>
    <phDependence>
        <text evidence="2">Optimum pH is 6.5.</text>
    </phDependence>
    <temperatureDependence>
        <text evidence="2">Optimum temperature is 37 degrees Celsius. Full activity is retained after incubating at up to 45 degrees Celsius for 10 minutes, while only 46% is left after incubating at 50 degrees Celsius. The protein is completely denatured after incubating at higher temperatures.</text>
    </temperatureDependence>
</comment>
<comment type="biotechnology">
    <text evidence="5">Might be an attractive biocatalyst for the production of the osmolyte glucosylglycerol, which is currently produced on industrial scale by exploiting a side activity of the closely related sucrose phosphorylase. GGoP from M.adhaerens may offer far higher productivities due to its high specific activity in the synthesis direction. Glucosylglycerol is commercially distributed as a moisturising agent in cosmetics and can also serve as a stabilizing agent in protein formulations, or even as a functional food.</text>
</comment>
<comment type="similarity">
    <text evidence="4">Belongs to the glycosyl hydrolase 13 family. Sucrose phosphorylase subfamily.</text>
</comment>
<sequence>MLLKNAVQLICYPDRIGNNLKDLYTVVDTHLSEAIGGLHILPFFPSNADGGFSPLTHKEVDPKVGTWDDIEAFTAKYDLCVDLTVNHISDESPEFTDFIANGFDSEYADLFVHVDKFGEISPDDMAKIHIRKEKEPFREVTLSDGTKTRVWCTFTEQQIDLNYESDLAYQLMESYIGFLTSKGVNLLRLDAFGYTTKRIGTSCFLVEPEVYQILDWVNQVALKHGAECLPEVHDHTSYQYAISRRNMHPYGFALPPLLLYSLLDANSTYLKNWLRMCPRNMVTVLDTHDGICIPDVEGVLPDEKIKVLIDNIDARSADPIMRRSAANIHSVGAIYQLTCTFYDALMQNDDAYIAARAIQFFTPGIPQVYYVGLLAGCNDHELMEQSGELRDINRHYYTLEEVEQDIQKPVVQRLLSLMKFRSNYPAFDGHFELNYSNNSSVAMAWRHGDYYCHLFVDLNFKTVKVTYTDVETGETRHLEC</sequence>
<gene>
    <name evidence="6" type="primary">gtfA</name>
    <name evidence="6" type="ordered locus">HP15_2853</name>
</gene>
<reference key="1">
    <citation type="submission" date="2010-02" db="EMBL/GenBank/DDBJ databases">
        <title>Complete genome sequence of Marinobacter adhaerens type strain (HP15).</title>
        <authorList>
            <person name="Gaerdes A.A.M."/>
            <person name="Kaeppel E."/>
            <person name="Shezad A."/>
            <person name="Seebah S."/>
            <person name="Teeling H."/>
            <person name="Yarza P."/>
            <person name="Gloeckner F.O."/>
            <person name="Ullrich M.S."/>
        </authorList>
    </citation>
    <scope>NUCLEOTIDE SEQUENCE [LARGE SCALE GENOMIC DNA]</scope>
    <source>
        <strain>DSM 23420 / HP15</strain>
    </source>
</reference>
<reference key="2">
    <citation type="journal article" date="2018" name="Appl. Microbiol. Biotechnol.">
        <title>Exploring the sequence diversity in glycoside hydrolase family 13_18 reveals a novel glucosylglycerol phosphorylase.</title>
        <authorList>
            <person name="Franceus J."/>
            <person name="Decuyper L."/>
            <person name="D'hooghe M."/>
            <person name="Desmet T."/>
        </authorList>
    </citation>
    <scope>FUNCTION</scope>
    <scope>CATALYTIC ACTIVITY</scope>
    <scope>BIOPHYSICOCHEMICAL PROPERTIES</scope>
    <scope>SUBSTRATE SPECIFICITY</scope>
    <scope>3D-STRUCTURE MODELING</scope>
    <scope>MUTAGENESIS OF TYR-194; ALA-333 AND GLN-336</scope>
    <scope>BIOTECHNOLOGY</scope>
    <source>
        <strain>DSM 23420 / HP15</strain>
    </source>
</reference>
<evidence type="ECO:0000250" key="1">
    <source>
        <dbReference type="UniProtKB" id="A0ZZH6"/>
    </source>
</evidence>
<evidence type="ECO:0000269" key="2">
    <source>
    </source>
</evidence>
<evidence type="ECO:0000303" key="3">
    <source>
    </source>
</evidence>
<evidence type="ECO:0000305" key="4"/>
<evidence type="ECO:0000305" key="5">
    <source>
    </source>
</evidence>
<evidence type="ECO:0000312" key="6">
    <source>
        <dbReference type="EMBL" id="ADP98617.1"/>
    </source>
</evidence>
<evidence type="ECO:0007829" key="7">
    <source>
        <dbReference type="PDB" id="7XDQ"/>
    </source>
</evidence>
<evidence type="ECO:0007829" key="8">
    <source>
        <dbReference type="PDB" id="7XDR"/>
    </source>
</evidence>
<organism>
    <name type="scientific">Marinobacter adhaerens (strain DSM 23420 / HP15)</name>
    <dbReference type="NCBI Taxonomy" id="225937"/>
    <lineage>
        <taxon>Bacteria</taxon>
        <taxon>Pseudomonadati</taxon>
        <taxon>Pseudomonadota</taxon>
        <taxon>Gammaproteobacteria</taxon>
        <taxon>Pseudomonadales</taxon>
        <taxon>Marinobacteraceae</taxon>
        <taxon>Marinobacter</taxon>
    </lineage>
</organism>
<accession>E4PMA5</accession>
<dbReference type="EC" id="2.4.1.359" evidence="2"/>
<dbReference type="EMBL" id="CP001978">
    <property type="protein sequence ID" value="ADP98617.1"/>
    <property type="molecule type" value="Genomic_DNA"/>
</dbReference>
<dbReference type="RefSeq" id="WP_014578108.1">
    <property type="nucleotide sequence ID" value="NC_017506.1"/>
</dbReference>
<dbReference type="PDB" id="7XDQ">
    <property type="method" value="X-ray"/>
    <property type="resolution" value="2.83 A"/>
    <property type="chains" value="A=1-480"/>
</dbReference>
<dbReference type="PDB" id="7XDR">
    <property type="method" value="X-ray"/>
    <property type="resolution" value="2.40 A"/>
    <property type="chains" value="A/B/C/D/E/F/G/H/I/J/K/L/M/N/O/P/Q/R=1-480"/>
</dbReference>
<dbReference type="PDBsum" id="7XDQ"/>
<dbReference type="PDBsum" id="7XDR"/>
<dbReference type="SMR" id="E4PMA5"/>
<dbReference type="STRING" id="225937.HP15_2853"/>
<dbReference type="CAZy" id="GH13">
    <property type="family name" value="Glycoside Hydrolase Family 13"/>
</dbReference>
<dbReference type="KEGG" id="mad:HP15_2853"/>
<dbReference type="PATRIC" id="fig|225937.3.peg.2880"/>
<dbReference type="eggNOG" id="COG0366">
    <property type="taxonomic scope" value="Bacteria"/>
</dbReference>
<dbReference type="HOGENOM" id="CLU_021358_1_0_6"/>
<dbReference type="BioCyc" id="MetaCyc:MONOMER-20515"/>
<dbReference type="BRENDA" id="2.4.1.359">
    <property type="organism ID" value="16299"/>
</dbReference>
<dbReference type="SABIO-RK" id="E4PMA5"/>
<dbReference type="Proteomes" id="UP000007077">
    <property type="component" value="Chromosome"/>
</dbReference>
<dbReference type="GO" id="GO:0004645">
    <property type="term" value="F:1,4-alpha-oligoglucan phosphorylase activity"/>
    <property type="evidence" value="ECO:0007669"/>
    <property type="project" value="InterPro"/>
</dbReference>
<dbReference type="GO" id="GO:0016757">
    <property type="term" value="F:glycosyltransferase activity"/>
    <property type="evidence" value="ECO:0000314"/>
    <property type="project" value="UniProtKB"/>
</dbReference>
<dbReference type="GO" id="GO:0051472">
    <property type="term" value="P:glucosylglycerol metabolic process"/>
    <property type="evidence" value="ECO:0000314"/>
    <property type="project" value="UniProtKB"/>
</dbReference>
<dbReference type="CDD" id="cd11355">
    <property type="entry name" value="AmyAc_Sucrose_phosphorylase"/>
    <property type="match status" value="1"/>
</dbReference>
<dbReference type="Gene3D" id="3.20.20.80">
    <property type="entry name" value="Glycosidases"/>
    <property type="match status" value="1"/>
</dbReference>
<dbReference type="Gene3D" id="3.90.400.10">
    <property type="entry name" value="Oligo-1,6-glucosidase, Domain 2"/>
    <property type="match status" value="1"/>
</dbReference>
<dbReference type="InterPro" id="IPR006047">
    <property type="entry name" value="Glyco_hydro_13_cat_dom"/>
</dbReference>
<dbReference type="InterPro" id="IPR017853">
    <property type="entry name" value="Glycoside_hydrolase_SF"/>
</dbReference>
<dbReference type="InterPro" id="IPR045857">
    <property type="entry name" value="O16G_dom_2"/>
</dbReference>
<dbReference type="InterPro" id="IPR016377">
    <property type="entry name" value="Sucrose_GGa_phosphorylase-rel"/>
</dbReference>
<dbReference type="InterPro" id="IPR022527">
    <property type="entry name" value="Sucrose_phospho"/>
</dbReference>
<dbReference type="NCBIfam" id="TIGR03852">
    <property type="entry name" value="sucrose_gtfA"/>
    <property type="match status" value="1"/>
</dbReference>
<dbReference type="PANTHER" id="PTHR38784">
    <property type="entry name" value="SUCROSE PHOSPHORYLASE"/>
    <property type="match status" value="1"/>
</dbReference>
<dbReference type="PANTHER" id="PTHR38784:SF1">
    <property type="entry name" value="SUCROSE PHOSPHORYLASE"/>
    <property type="match status" value="1"/>
</dbReference>
<dbReference type="Pfam" id="PF00128">
    <property type="entry name" value="Alpha-amylase"/>
    <property type="match status" value="1"/>
</dbReference>
<dbReference type="PIRSF" id="PIRSF003059">
    <property type="entry name" value="Sucrose_phosphorylase"/>
    <property type="match status" value="1"/>
</dbReference>
<dbReference type="SMART" id="SM00642">
    <property type="entry name" value="Aamy"/>
    <property type="match status" value="1"/>
</dbReference>
<dbReference type="SUPFAM" id="SSF51445">
    <property type="entry name" value="(Trans)glycosidases"/>
    <property type="match status" value="1"/>
</dbReference>
<keyword id="KW-0002">3D-structure</keyword>
<keyword id="KW-0119">Carbohydrate metabolism</keyword>
<keyword id="KW-0328">Glycosyltransferase</keyword>
<keyword id="KW-0808">Transferase</keyword>
<proteinExistence type="evidence at protein level"/>
<name>GGOP_MARAH</name>